<sequence>MAFQWPRFPLQPWRHVTGHLRLPGDKSISNRSLLLGALAEGVTEVTGLLDSDDARAMLNALRDLGVVIEGPHQGRCTVHGVGLHGLKAPPGPLFLGNAGTAMRPLSAALALQPFDTTLTGDPRMSERPINRLVDALREMGAVIEYLAQEGYPPLTIRGGGSVSSQFLTALLMTAPMASAQIKSGLLLSKPYIDITLNVMPFGVPTRDHTERIFAVSAIRYPSPAVLRLEGDATSASYFLAAAGIKGVPVTGIGRHSMQGDSWFPRALRRMGARSCGSSMIVCPRGELRAAVRSDSNSIPDAAMTLATXXALARGGRRPRTIFAWRVKETDRLYAMSTELGAAGARVVPGAGLRGCPLRGRSYYVARCRRDSRMAMCFSLPAHGGRAVRHPGSRLHRQDAELSSKVVRSVPEVWGMAITALRCPSGGALRAMARFESMTGQRGDVVSQLPLLGAARRHAGTFGG</sequence>
<organism>
    <name type="scientific">Burkholderia pseudomallei</name>
    <name type="common">Pseudomonas pseudomallei</name>
    <dbReference type="NCBI Taxonomy" id="28450"/>
    <lineage>
        <taxon>Bacteria</taxon>
        <taxon>Pseudomonadati</taxon>
        <taxon>Pseudomonadota</taxon>
        <taxon>Betaproteobacteria</taxon>
        <taxon>Burkholderiales</taxon>
        <taxon>Burkholderiaceae</taxon>
        <taxon>Burkholderia</taxon>
        <taxon>pseudomallei group</taxon>
    </lineage>
</organism>
<name>AROA_BURPE</name>
<proteinExistence type="inferred from homology"/>
<protein>
    <recommendedName>
        <fullName evidence="1">3-phosphoshikimate 1-carboxyvinyltransferase</fullName>
        <ecNumber evidence="1">2.5.1.19</ecNumber>
    </recommendedName>
    <alternativeName>
        <fullName evidence="1">5-enolpyruvylshikimate-3-phosphate synthase</fullName>
        <shortName evidence="1">EPSP synthase</shortName>
        <shortName evidence="1">EPSPS</shortName>
    </alternativeName>
</protein>
<dbReference type="EC" id="2.5.1.19" evidence="1"/>
<dbReference type="EMBL" id="X77019">
    <property type="protein sequence ID" value="CAA54317.1"/>
    <property type="status" value="ALT_FRAME"/>
    <property type="molecule type" value="Genomic_DNA"/>
</dbReference>
<dbReference type="UniPathway" id="UPA00053">
    <property type="reaction ID" value="UER00089"/>
</dbReference>
<dbReference type="GO" id="GO:0005737">
    <property type="term" value="C:cytoplasm"/>
    <property type="evidence" value="ECO:0007669"/>
    <property type="project" value="UniProtKB-SubCell"/>
</dbReference>
<dbReference type="GO" id="GO:0003866">
    <property type="term" value="F:3-phosphoshikimate 1-carboxyvinyltransferase activity"/>
    <property type="evidence" value="ECO:0007669"/>
    <property type="project" value="UniProtKB-EC"/>
</dbReference>
<dbReference type="GO" id="GO:0008652">
    <property type="term" value="P:amino acid biosynthetic process"/>
    <property type="evidence" value="ECO:0007669"/>
    <property type="project" value="UniProtKB-KW"/>
</dbReference>
<dbReference type="GO" id="GO:0009073">
    <property type="term" value="P:aromatic amino acid family biosynthetic process"/>
    <property type="evidence" value="ECO:0007669"/>
    <property type="project" value="UniProtKB-KW"/>
</dbReference>
<dbReference type="GO" id="GO:0009423">
    <property type="term" value="P:chorismate biosynthetic process"/>
    <property type="evidence" value="ECO:0007669"/>
    <property type="project" value="UniProtKB-UniPathway"/>
</dbReference>
<dbReference type="CDD" id="cd01556">
    <property type="entry name" value="EPSP_synthase"/>
    <property type="match status" value="1"/>
</dbReference>
<dbReference type="FunFam" id="3.65.10.10:FF:000005">
    <property type="entry name" value="3-phosphoshikimate 1-carboxyvinyltransferase"/>
    <property type="match status" value="1"/>
</dbReference>
<dbReference type="Gene3D" id="3.65.10.10">
    <property type="entry name" value="Enolpyruvate transferase domain"/>
    <property type="match status" value="2"/>
</dbReference>
<dbReference type="InterPro" id="IPR001986">
    <property type="entry name" value="Enolpyruvate_Tfrase_dom"/>
</dbReference>
<dbReference type="InterPro" id="IPR036968">
    <property type="entry name" value="Enolpyruvate_Tfrase_sf"/>
</dbReference>
<dbReference type="InterPro" id="IPR006264">
    <property type="entry name" value="EPSP_synthase"/>
</dbReference>
<dbReference type="InterPro" id="IPR023193">
    <property type="entry name" value="EPSP_synthase_CS"/>
</dbReference>
<dbReference type="InterPro" id="IPR013792">
    <property type="entry name" value="RNA3'P_cycl/enolpyr_Trfase_a/b"/>
</dbReference>
<dbReference type="NCBIfam" id="TIGR01356">
    <property type="entry name" value="aroA"/>
    <property type="match status" value="1"/>
</dbReference>
<dbReference type="PANTHER" id="PTHR21090">
    <property type="entry name" value="AROM/DEHYDROQUINATE SYNTHASE"/>
    <property type="match status" value="1"/>
</dbReference>
<dbReference type="PANTHER" id="PTHR21090:SF5">
    <property type="entry name" value="PENTAFUNCTIONAL AROM POLYPEPTIDE"/>
    <property type="match status" value="1"/>
</dbReference>
<dbReference type="Pfam" id="PF00275">
    <property type="entry name" value="EPSP_synthase"/>
    <property type="match status" value="1"/>
</dbReference>
<dbReference type="SUPFAM" id="SSF55205">
    <property type="entry name" value="EPT/RTPC-like"/>
    <property type="match status" value="1"/>
</dbReference>
<dbReference type="PROSITE" id="PS00104">
    <property type="entry name" value="EPSP_SYNTHASE_1"/>
    <property type="match status" value="1"/>
</dbReference>
<dbReference type="PROSITE" id="PS00885">
    <property type="entry name" value="EPSP_SYNTHASE_2"/>
    <property type="match status" value="1"/>
</dbReference>
<feature type="chain" id="PRO_0000088239" description="3-phosphoshikimate 1-carboxyvinyltransferase">
    <location>
        <begin position="1"/>
        <end position="463"/>
    </location>
</feature>
<feature type="active site" description="Proton acceptor" evidence="1">
    <location>
        <position position="300"/>
    </location>
</feature>
<feature type="binding site" evidence="1">
    <location>
        <position position="26"/>
    </location>
    <ligand>
        <name>3-phosphoshikimate</name>
        <dbReference type="ChEBI" id="CHEBI:145989"/>
    </ligand>
</feature>
<feature type="binding site" evidence="1">
    <location>
        <position position="26"/>
    </location>
    <ligand>
        <name>phosphoenolpyruvate</name>
        <dbReference type="ChEBI" id="CHEBI:58702"/>
    </ligand>
</feature>
<feature type="binding site" evidence="1">
    <location>
        <position position="27"/>
    </location>
    <ligand>
        <name>3-phosphoshikimate</name>
        <dbReference type="ChEBI" id="CHEBI:145989"/>
    </ligand>
</feature>
<feature type="binding site" evidence="1">
    <location>
        <position position="31"/>
    </location>
    <ligand>
        <name>3-phosphoshikimate</name>
        <dbReference type="ChEBI" id="CHEBI:145989"/>
    </ligand>
</feature>
<feature type="binding site" evidence="1">
    <location>
        <position position="99"/>
    </location>
    <ligand>
        <name>phosphoenolpyruvate</name>
        <dbReference type="ChEBI" id="CHEBI:58702"/>
    </ligand>
</feature>
<feature type="binding site" evidence="1">
    <location>
        <position position="127"/>
    </location>
    <ligand>
        <name>phosphoenolpyruvate</name>
        <dbReference type="ChEBI" id="CHEBI:58702"/>
    </ligand>
</feature>
<feature type="binding site" evidence="1">
    <location>
        <position position="163"/>
    </location>
    <ligand>
        <name>3-phosphoshikimate</name>
        <dbReference type="ChEBI" id="CHEBI:145989"/>
    </ligand>
</feature>
<feature type="binding site" evidence="1">
    <location>
        <position position="164"/>
    </location>
    <ligand>
        <name>3-phosphoshikimate</name>
        <dbReference type="ChEBI" id="CHEBI:145989"/>
    </ligand>
</feature>
<feature type="binding site" evidence="1">
    <location>
        <position position="165"/>
    </location>
    <ligand>
        <name>3-phosphoshikimate</name>
        <dbReference type="ChEBI" id="CHEBI:145989"/>
    </ligand>
</feature>
<feature type="binding site" evidence="1">
    <location>
        <position position="165"/>
    </location>
    <ligand>
        <name>phosphoenolpyruvate</name>
        <dbReference type="ChEBI" id="CHEBI:58702"/>
    </ligand>
</feature>
<feature type="binding site" evidence="1">
    <location>
        <position position="188"/>
    </location>
    <ligand>
        <name>3-phosphoshikimate</name>
        <dbReference type="ChEBI" id="CHEBI:145989"/>
    </ligand>
</feature>
<feature type="binding site" evidence="1">
    <location>
        <position position="300"/>
    </location>
    <ligand>
        <name>3-phosphoshikimate</name>
        <dbReference type="ChEBI" id="CHEBI:145989"/>
    </ligand>
</feature>
<feature type="binding site" evidence="1">
    <location>
        <position position="327"/>
    </location>
    <ligand>
        <name>3-phosphoshikimate</name>
        <dbReference type="ChEBI" id="CHEBI:145989"/>
    </ligand>
</feature>
<feature type="binding site" evidence="1">
    <location>
        <position position="331"/>
    </location>
    <ligand>
        <name>phosphoenolpyruvate</name>
        <dbReference type="ChEBI" id="CHEBI:58702"/>
    </ligand>
</feature>
<feature type="binding site" evidence="1">
    <location>
        <position position="372"/>
    </location>
    <ligand>
        <name>phosphoenolpyruvate</name>
        <dbReference type="ChEBI" id="CHEBI:58702"/>
    </ligand>
</feature>
<comment type="function">
    <text evidence="1">Catalyzes the transfer of the enolpyruvyl moiety of phosphoenolpyruvate (PEP) to the 5-hydroxyl of shikimate-3-phosphate (S3P) to produce enolpyruvyl shikimate-3-phosphate and inorganic phosphate.</text>
</comment>
<comment type="catalytic activity">
    <reaction evidence="1">
        <text>3-phosphoshikimate + phosphoenolpyruvate = 5-O-(1-carboxyvinyl)-3-phosphoshikimate + phosphate</text>
        <dbReference type="Rhea" id="RHEA:21256"/>
        <dbReference type="ChEBI" id="CHEBI:43474"/>
        <dbReference type="ChEBI" id="CHEBI:57701"/>
        <dbReference type="ChEBI" id="CHEBI:58702"/>
        <dbReference type="ChEBI" id="CHEBI:145989"/>
        <dbReference type="EC" id="2.5.1.19"/>
    </reaction>
    <physiologicalReaction direction="left-to-right" evidence="1">
        <dbReference type="Rhea" id="RHEA:21257"/>
    </physiologicalReaction>
</comment>
<comment type="pathway">
    <text evidence="1">Metabolic intermediate biosynthesis; chorismate biosynthesis; chorismate from D-erythrose 4-phosphate and phosphoenolpyruvate: step 6/7.</text>
</comment>
<comment type="subunit">
    <text evidence="1">Monomer.</text>
</comment>
<comment type="subcellular location">
    <subcellularLocation>
        <location evidence="1">Cytoplasm</location>
    </subcellularLocation>
</comment>
<comment type="similarity">
    <text evidence="1 2">Belongs to the EPSP synthase family.</text>
</comment>
<comment type="sequence caution" evidence="2">
    <conflict type="frameshift">
        <sequence resource="EMBL-CDS" id="CAA54317"/>
    </conflict>
</comment>
<reference key="1">
    <citation type="submission" date="1993-12" db="EMBL/GenBank/DDBJ databases">
        <title>Cloning and sequencing of the aroA gene from Pseudomonas pseudomallei.</title>
        <authorList>
            <person name="Penaloza-Vazquez A."/>
            <person name="Bailey A.M."/>
        </authorList>
    </citation>
    <scope>NUCLEOTIDE SEQUENCE [GENOMIC DNA]</scope>
</reference>
<keyword id="KW-0028">Amino-acid biosynthesis</keyword>
<keyword id="KW-0057">Aromatic amino acid biosynthesis</keyword>
<keyword id="KW-0963">Cytoplasm</keyword>
<keyword id="KW-0808">Transferase</keyword>
<accession>P39915</accession>
<gene>
    <name evidence="1" type="primary">aroA</name>
</gene>
<evidence type="ECO:0000255" key="1">
    <source>
        <dbReference type="HAMAP-Rule" id="MF_00210"/>
    </source>
</evidence>
<evidence type="ECO:0000305" key="2"/>